<dbReference type="EMBL" id="LT708304">
    <property type="protein sequence ID" value="SIT99257.1"/>
    <property type="molecule type" value="Genomic_DNA"/>
</dbReference>
<dbReference type="RefSeq" id="NP_854317.1">
    <property type="nucleotide sequence ID" value="NC_002945.3"/>
</dbReference>
<dbReference type="RefSeq" id="WP_003403291.1">
    <property type="nucleotide sequence ID" value="NC_002945.4"/>
</dbReference>
<dbReference type="SMR" id="P66057"/>
<dbReference type="GeneID" id="45424600"/>
<dbReference type="KEGG" id="mbo:BQ2027_MB0659"/>
<dbReference type="PATRIC" id="fig|233413.5.peg.719"/>
<dbReference type="Proteomes" id="UP000001419">
    <property type="component" value="Chromosome"/>
</dbReference>
<dbReference type="GO" id="GO:0022625">
    <property type="term" value="C:cytosolic large ribosomal subunit"/>
    <property type="evidence" value="ECO:0007669"/>
    <property type="project" value="TreeGrafter"/>
</dbReference>
<dbReference type="GO" id="GO:0070180">
    <property type="term" value="F:large ribosomal subunit rRNA binding"/>
    <property type="evidence" value="ECO:0007669"/>
    <property type="project" value="UniProtKB-UniRule"/>
</dbReference>
<dbReference type="GO" id="GO:0003735">
    <property type="term" value="F:structural constituent of ribosome"/>
    <property type="evidence" value="ECO:0007669"/>
    <property type="project" value="InterPro"/>
</dbReference>
<dbReference type="GO" id="GO:0006412">
    <property type="term" value="P:translation"/>
    <property type="evidence" value="ECO:0007669"/>
    <property type="project" value="UniProtKB-UniRule"/>
</dbReference>
<dbReference type="CDD" id="cd00349">
    <property type="entry name" value="Ribosomal_L11"/>
    <property type="match status" value="1"/>
</dbReference>
<dbReference type="FunFam" id="1.10.10.250:FF:000001">
    <property type="entry name" value="50S ribosomal protein L11"/>
    <property type="match status" value="1"/>
</dbReference>
<dbReference type="FunFam" id="3.30.1550.10:FF:000001">
    <property type="entry name" value="50S ribosomal protein L11"/>
    <property type="match status" value="1"/>
</dbReference>
<dbReference type="Gene3D" id="1.10.10.250">
    <property type="entry name" value="Ribosomal protein L11, C-terminal domain"/>
    <property type="match status" value="1"/>
</dbReference>
<dbReference type="Gene3D" id="3.30.1550.10">
    <property type="entry name" value="Ribosomal protein L11/L12, N-terminal domain"/>
    <property type="match status" value="1"/>
</dbReference>
<dbReference type="HAMAP" id="MF_00736">
    <property type="entry name" value="Ribosomal_uL11"/>
    <property type="match status" value="1"/>
</dbReference>
<dbReference type="InterPro" id="IPR000911">
    <property type="entry name" value="Ribosomal_uL11"/>
</dbReference>
<dbReference type="InterPro" id="IPR006519">
    <property type="entry name" value="Ribosomal_uL11_bac-typ"/>
</dbReference>
<dbReference type="InterPro" id="IPR020783">
    <property type="entry name" value="Ribosomal_uL11_C"/>
</dbReference>
<dbReference type="InterPro" id="IPR036769">
    <property type="entry name" value="Ribosomal_uL11_C_sf"/>
</dbReference>
<dbReference type="InterPro" id="IPR020785">
    <property type="entry name" value="Ribosomal_uL11_CS"/>
</dbReference>
<dbReference type="InterPro" id="IPR020784">
    <property type="entry name" value="Ribosomal_uL11_N"/>
</dbReference>
<dbReference type="InterPro" id="IPR036796">
    <property type="entry name" value="Ribosomal_uL11_N_sf"/>
</dbReference>
<dbReference type="NCBIfam" id="TIGR01632">
    <property type="entry name" value="L11_bact"/>
    <property type="match status" value="1"/>
</dbReference>
<dbReference type="PANTHER" id="PTHR11661">
    <property type="entry name" value="60S RIBOSOMAL PROTEIN L12"/>
    <property type="match status" value="1"/>
</dbReference>
<dbReference type="PANTHER" id="PTHR11661:SF1">
    <property type="entry name" value="LARGE RIBOSOMAL SUBUNIT PROTEIN UL11M"/>
    <property type="match status" value="1"/>
</dbReference>
<dbReference type="Pfam" id="PF00298">
    <property type="entry name" value="Ribosomal_L11"/>
    <property type="match status" value="1"/>
</dbReference>
<dbReference type="Pfam" id="PF03946">
    <property type="entry name" value="Ribosomal_L11_N"/>
    <property type="match status" value="1"/>
</dbReference>
<dbReference type="SMART" id="SM00649">
    <property type="entry name" value="RL11"/>
    <property type="match status" value="1"/>
</dbReference>
<dbReference type="SUPFAM" id="SSF54747">
    <property type="entry name" value="Ribosomal L11/L12e N-terminal domain"/>
    <property type="match status" value="1"/>
</dbReference>
<dbReference type="SUPFAM" id="SSF46906">
    <property type="entry name" value="Ribosomal protein L11, C-terminal domain"/>
    <property type="match status" value="1"/>
</dbReference>
<dbReference type="PROSITE" id="PS00359">
    <property type="entry name" value="RIBOSOMAL_L11"/>
    <property type="match status" value="1"/>
</dbReference>
<reference key="1">
    <citation type="journal article" date="2003" name="Proc. Natl. Acad. Sci. U.S.A.">
        <title>The complete genome sequence of Mycobacterium bovis.</title>
        <authorList>
            <person name="Garnier T."/>
            <person name="Eiglmeier K."/>
            <person name="Camus J.-C."/>
            <person name="Medina N."/>
            <person name="Mansoor H."/>
            <person name="Pryor M."/>
            <person name="Duthoy S."/>
            <person name="Grondin S."/>
            <person name="Lacroix C."/>
            <person name="Monsempe C."/>
            <person name="Simon S."/>
            <person name="Harris B."/>
            <person name="Atkin R."/>
            <person name="Doggett J."/>
            <person name="Mayes R."/>
            <person name="Keating L."/>
            <person name="Wheeler P.R."/>
            <person name="Parkhill J."/>
            <person name="Barrell B.G."/>
            <person name="Cole S.T."/>
            <person name="Gordon S.V."/>
            <person name="Hewinson R.G."/>
        </authorList>
    </citation>
    <scope>NUCLEOTIDE SEQUENCE [LARGE SCALE GENOMIC DNA]</scope>
    <source>
        <strain>ATCC BAA-935 / AF2122/97</strain>
    </source>
</reference>
<reference key="2">
    <citation type="journal article" date="2017" name="Genome Announc.">
        <title>Updated reference genome sequence and annotation of Mycobacterium bovis AF2122/97.</title>
        <authorList>
            <person name="Malone K.M."/>
            <person name="Farrell D."/>
            <person name="Stuber T.P."/>
            <person name="Schubert O.T."/>
            <person name="Aebersold R."/>
            <person name="Robbe-Austerman S."/>
            <person name="Gordon S.V."/>
        </authorList>
    </citation>
    <scope>NUCLEOTIDE SEQUENCE [LARGE SCALE GENOMIC DNA]</scope>
    <scope>GENOME REANNOTATION</scope>
    <source>
        <strain>ATCC BAA-935 / AF2122/97</strain>
    </source>
</reference>
<comment type="function">
    <text evidence="1">Forms part of the ribosomal stalk which helps the ribosome interact with GTP-bound translation factors.</text>
</comment>
<comment type="subunit">
    <text evidence="1">Part of the ribosomal stalk of the 50S ribosomal subunit. Interacts with L10 and the large rRNA to form the base of the stalk. L10 forms an elongated spine to which L12 dimers bind in a sequential fashion forming a multimeric L10(L12)X complex.</text>
</comment>
<comment type="PTM">
    <text evidence="1">One or more lysine residues are methylated.</text>
</comment>
<comment type="similarity">
    <text evidence="1">Belongs to the universal ribosomal protein uL11 family.</text>
</comment>
<keyword id="KW-0488">Methylation</keyword>
<keyword id="KW-1185">Reference proteome</keyword>
<keyword id="KW-0687">Ribonucleoprotein</keyword>
<keyword id="KW-0689">Ribosomal protein</keyword>
<keyword id="KW-0694">RNA-binding</keyword>
<keyword id="KW-0699">rRNA-binding</keyword>
<sequence length="142" mass="15003">MAPKKKVAGLIKLQIVAGQANPAPPVGPALGQHGVNIMEFCKAYNAATENQRGNVIPVEITVYEDRSFTFTLKTPPAAKLLLKAAGVAKGSAEPHKTKVAKVTWDQVREIAETKKTDLNANDVDAAAKIIAGTARSMGITVE</sequence>
<evidence type="ECO:0000255" key="1">
    <source>
        <dbReference type="HAMAP-Rule" id="MF_00736"/>
    </source>
</evidence>
<evidence type="ECO:0000305" key="2"/>
<organism>
    <name type="scientific">Mycobacterium bovis (strain ATCC BAA-935 / AF2122/97)</name>
    <dbReference type="NCBI Taxonomy" id="233413"/>
    <lineage>
        <taxon>Bacteria</taxon>
        <taxon>Bacillati</taxon>
        <taxon>Actinomycetota</taxon>
        <taxon>Actinomycetes</taxon>
        <taxon>Mycobacteriales</taxon>
        <taxon>Mycobacteriaceae</taxon>
        <taxon>Mycobacterium</taxon>
        <taxon>Mycobacterium tuberculosis complex</taxon>
    </lineage>
</organism>
<feature type="chain" id="PRO_0000104315" description="Large ribosomal subunit protein uL11">
    <location>
        <begin position="1"/>
        <end position="142"/>
    </location>
</feature>
<name>RL11_MYCBO</name>
<accession>P66057</accession>
<accession>A0A1R3XW21</accession>
<accession>P96931</accession>
<accession>X2BFH0</accession>
<proteinExistence type="inferred from homology"/>
<protein>
    <recommendedName>
        <fullName evidence="1">Large ribosomal subunit protein uL11</fullName>
    </recommendedName>
    <alternativeName>
        <fullName evidence="2">50S ribosomal protein L11</fullName>
    </alternativeName>
</protein>
<gene>
    <name evidence="1" type="primary">rplK</name>
    <name type="ordered locus">BQ2027_MB0659</name>
</gene>